<protein>
    <recommendedName>
        <fullName>BPTI/Kunitz domain-containing protein 2</fullName>
    </recommendedName>
    <alternativeName>
        <fullName>Prism serine protease inhibitor 2</fullName>
        <shortName>PISP2</shortName>
    </alternativeName>
</protein>
<dbReference type="EMBL" id="HE610398">
    <property type="protein sequence ID" value="CCE46172.1"/>
    <property type="molecule type" value="mRNA"/>
</dbReference>
<dbReference type="SMR" id="H2A0N1"/>
<dbReference type="GO" id="GO:0005615">
    <property type="term" value="C:extracellular space"/>
    <property type="evidence" value="ECO:0007669"/>
    <property type="project" value="TreeGrafter"/>
</dbReference>
<dbReference type="GO" id="GO:0004867">
    <property type="term" value="F:serine-type endopeptidase inhibitor activity"/>
    <property type="evidence" value="ECO:0007669"/>
    <property type="project" value="UniProtKB-KW"/>
</dbReference>
<dbReference type="CDD" id="cd00109">
    <property type="entry name" value="Kunitz-type"/>
    <property type="match status" value="1"/>
</dbReference>
<dbReference type="Gene3D" id="4.10.410.10">
    <property type="entry name" value="Pancreatic trypsin inhibitor Kunitz domain"/>
    <property type="match status" value="2"/>
</dbReference>
<dbReference type="InterPro" id="IPR002223">
    <property type="entry name" value="Kunitz_BPTI"/>
</dbReference>
<dbReference type="InterPro" id="IPR036880">
    <property type="entry name" value="Kunitz_BPTI_sf"/>
</dbReference>
<dbReference type="InterPro" id="IPR020901">
    <property type="entry name" value="Prtase_inh_Kunz-CS"/>
</dbReference>
<dbReference type="InterPro" id="IPR050098">
    <property type="entry name" value="TFPI/VKTCI-like"/>
</dbReference>
<dbReference type="PANTHER" id="PTHR10083:SF374">
    <property type="entry name" value="BPTI_KUNITZ INHIBITOR DOMAIN-CONTAINING PROTEIN"/>
    <property type="match status" value="1"/>
</dbReference>
<dbReference type="PANTHER" id="PTHR10083">
    <property type="entry name" value="KUNITZ-TYPE PROTEASE INHIBITOR-RELATED"/>
    <property type="match status" value="1"/>
</dbReference>
<dbReference type="Pfam" id="PF00014">
    <property type="entry name" value="Kunitz_BPTI"/>
    <property type="match status" value="2"/>
</dbReference>
<dbReference type="PRINTS" id="PR00759">
    <property type="entry name" value="BASICPTASE"/>
</dbReference>
<dbReference type="SMART" id="SM00131">
    <property type="entry name" value="KU"/>
    <property type="match status" value="2"/>
</dbReference>
<dbReference type="SUPFAM" id="SSF57362">
    <property type="entry name" value="BPTI-like"/>
    <property type="match status" value="2"/>
</dbReference>
<dbReference type="PROSITE" id="PS00280">
    <property type="entry name" value="BPTI_KUNITZ_1"/>
    <property type="match status" value="2"/>
</dbReference>
<dbReference type="PROSITE" id="PS50279">
    <property type="entry name" value="BPTI_KUNITZ_2"/>
    <property type="match status" value="2"/>
</dbReference>
<accession>H2A0N1</accession>
<comment type="subcellular location">
    <subcellularLocation>
        <location evidence="3">Secreted</location>
    </subcellularLocation>
</comment>
<comment type="tissue specificity">
    <text evidence="3">Prismatic layer of shell (at protein level).</text>
</comment>
<proteinExistence type="evidence at protein level"/>
<evidence type="ECO:0000255" key="1"/>
<evidence type="ECO:0000255" key="2">
    <source>
        <dbReference type="PROSITE-ProRule" id="PRU00031"/>
    </source>
</evidence>
<evidence type="ECO:0000269" key="3">
    <source>
    </source>
</evidence>
<evidence type="ECO:0000305" key="4"/>
<organism>
    <name type="scientific">Margaritifera margaritifera</name>
    <name type="common">Freshwater pearl mussel</name>
    <dbReference type="NCBI Taxonomy" id="102329"/>
    <lineage>
        <taxon>Eukaryota</taxon>
        <taxon>Metazoa</taxon>
        <taxon>Spiralia</taxon>
        <taxon>Lophotrochozoa</taxon>
        <taxon>Mollusca</taxon>
        <taxon>Bivalvia</taxon>
        <taxon>Autobranchia</taxon>
        <taxon>Pteriomorphia</taxon>
        <taxon>Pterioida</taxon>
        <taxon>Pterioidea</taxon>
        <taxon>Pteriidae</taxon>
        <taxon>Pinctada</taxon>
    </lineage>
</organism>
<sequence length="141" mass="15454">MLASCHITSLSGILLLLCVQCSAQILINPCGDVPGVRGPCSANLRRFTFAYGRCVPFYYGGCLGTRNRFDSFVECERRCLGGPCNQTPGVVGRCYAAIPRYTYVPFPINSCVSFTYGGCEGNDNNFEDVNVCFNLCVFRRG</sequence>
<keyword id="KW-0903">Direct protein sequencing</keyword>
<keyword id="KW-1015">Disulfide bond</keyword>
<keyword id="KW-0646">Protease inhibitor</keyword>
<keyword id="KW-0677">Repeat</keyword>
<keyword id="KW-0964">Secreted</keyword>
<keyword id="KW-0722">Serine protease inhibitor</keyword>
<keyword id="KW-0732">Signal</keyword>
<feature type="signal peptide" evidence="1">
    <location>
        <begin position="1"/>
        <end position="23"/>
    </location>
</feature>
<feature type="chain" id="PRO_0000417938" description="BPTI/Kunitz domain-containing protein 2" evidence="1">
    <location>
        <begin position="24"/>
        <end position="141"/>
    </location>
</feature>
<feature type="domain" description="BPTI/Kunitz inhibitor 1" evidence="2">
    <location>
        <begin position="30"/>
        <end position="79"/>
    </location>
</feature>
<feature type="domain" description="BPTI/Kunitz inhibitor 2" evidence="2">
    <location>
        <begin position="84"/>
        <end position="136"/>
    </location>
</feature>
<feature type="disulfide bond" evidence="2">
    <location>
        <begin position="30"/>
        <end position="79"/>
    </location>
</feature>
<feature type="disulfide bond" evidence="2">
    <location>
        <begin position="40"/>
        <end position="62"/>
    </location>
</feature>
<feature type="disulfide bond" evidence="2">
    <location>
        <begin position="54"/>
        <end position="75"/>
    </location>
</feature>
<feature type="disulfide bond" evidence="2">
    <location>
        <begin position="84"/>
        <end position="136"/>
    </location>
</feature>
<feature type="disulfide bond" evidence="2">
    <location>
        <begin position="94"/>
        <end position="119"/>
    </location>
</feature>
<feature type="disulfide bond" evidence="2">
    <location>
        <begin position="111"/>
        <end position="132"/>
    </location>
</feature>
<reference evidence="4" key="1">
    <citation type="journal article" date="2010" name="BMC Genomics">
        <title>Transcriptome and proteome analysis of Pinctada margaritifera calcifying mantle and shell: focus on biomineralization.</title>
        <authorList>
            <person name="Joubert C."/>
            <person name="Piquemal D."/>
            <person name="Marie B."/>
            <person name="Manchon L."/>
            <person name="Pierrat F."/>
            <person name="Zanella-Cleon I."/>
            <person name="Cochennec-Laureau N."/>
            <person name="Gueguen Y."/>
            <person name="Montagnani C."/>
        </authorList>
    </citation>
    <scope>NUCLEOTIDE SEQUENCE [MRNA]</scope>
    <scope>IDENTIFICATION</scope>
    <source>
        <tissue>Mantle</tissue>
    </source>
</reference>
<reference key="2">
    <citation type="journal article" date="2012" name="Proc. Natl. Acad. Sci. U.S.A.">
        <title>Different secretory repertoires control the biomineralization processes of prism and nacre deposition of the pearl oyster shell.</title>
        <authorList>
            <person name="Marie B."/>
            <person name="Joubert C."/>
            <person name="Tayale A."/>
            <person name="Zanella-Cleon I."/>
            <person name="Belliard C."/>
            <person name="Piquemal D."/>
            <person name="Cochennec-Laureau N."/>
            <person name="Marin F."/>
            <person name="Gueguen Y."/>
            <person name="Montagnani C."/>
        </authorList>
    </citation>
    <scope>PROTEIN SEQUENCE OF 79-93</scope>
    <scope>SUBCELLULAR LOCATION</scope>
    <scope>TISSUE SPECIFICITY</scope>
    <source>
        <tissue>Shell</tissue>
    </source>
</reference>
<name>KCP2_PINMG</name>